<proteinExistence type="inferred from homology"/>
<organism>
    <name type="scientific">Lacticaseibacillus casei (strain BL23)</name>
    <name type="common">Lactobacillus casei</name>
    <dbReference type="NCBI Taxonomy" id="543734"/>
    <lineage>
        <taxon>Bacteria</taxon>
        <taxon>Bacillati</taxon>
        <taxon>Bacillota</taxon>
        <taxon>Bacilli</taxon>
        <taxon>Lactobacillales</taxon>
        <taxon>Lactobacillaceae</taxon>
        <taxon>Lacticaseibacillus</taxon>
    </lineage>
</organism>
<feature type="chain" id="PRO_1000127141" description="Small ribosomal subunit protein uS10">
    <location>
        <begin position="1"/>
        <end position="102"/>
    </location>
</feature>
<protein>
    <recommendedName>
        <fullName evidence="1">Small ribosomal subunit protein uS10</fullName>
    </recommendedName>
    <alternativeName>
        <fullName evidence="2">30S ribosomal protein S10</fullName>
    </alternativeName>
</protein>
<accession>B3WAL8</accession>
<sequence length="102" mass="11736">MAKQKIRIRLKAYEHRILDQSADKIVETAKRTGATISGPIPLPTERTLYTVLRSPHKYKDSREQFEMRTHKRLIDIVNPTPKTVDALMKLDLPSGVDIEIKL</sequence>
<gene>
    <name evidence="1" type="primary">rpsJ</name>
    <name type="ordered locus">LCABL_26710</name>
</gene>
<dbReference type="EMBL" id="FM177140">
    <property type="protein sequence ID" value="CAQ67737.1"/>
    <property type="molecule type" value="Genomic_DNA"/>
</dbReference>
<dbReference type="SMR" id="B3WAL8"/>
<dbReference type="KEGG" id="lcb:LCABL_26710"/>
<dbReference type="HOGENOM" id="CLU_122625_1_3_9"/>
<dbReference type="GO" id="GO:1990904">
    <property type="term" value="C:ribonucleoprotein complex"/>
    <property type="evidence" value="ECO:0007669"/>
    <property type="project" value="UniProtKB-KW"/>
</dbReference>
<dbReference type="GO" id="GO:0005840">
    <property type="term" value="C:ribosome"/>
    <property type="evidence" value="ECO:0007669"/>
    <property type="project" value="UniProtKB-KW"/>
</dbReference>
<dbReference type="GO" id="GO:0003735">
    <property type="term" value="F:structural constituent of ribosome"/>
    <property type="evidence" value="ECO:0007669"/>
    <property type="project" value="InterPro"/>
</dbReference>
<dbReference type="GO" id="GO:0000049">
    <property type="term" value="F:tRNA binding"/>
    <property type="evidence" value="ECO:0007669"/>
    <property type="project" value="UniProtKB-UniRule"/>
</dbReference>
<dbReference type="GO" id="GO:0006412">
    <property type="term" value="P:translation"/>
    <property type="evidence" value="ECO:0007669"/>
    <property type="project" value="UniProtKB-UniRule"/>
</dbReference>
<dbReference type="FunFam" id="3.30.70.600:FF:000001">
    <property type="entry name" value="30S ribosomal protein S10"/>
    <property type="match status" value="1"/>
</dbReference>
<dbReference type="Gene3D" id="3.30.70.600">
    <property type="entry name" value="Ribosomal protein S10 domain"/>
    <property type="match status" value="1"/>
</dbReference>
<dbReference type="HAMAP" id="MF_00508">
    <property type="entry name" value="Ribosomal_uS10"/>
    <property type="match status" value="1"/>
</dbReference>
<dbReference type="InterPro" id="IPR001848">
    <property type="entry name" value="Ribosomal_uS10"/>
</dbReference>
<dbReference type="InterPro" id="IPR018268">
    <property type="entry name" value="Ribosomal_uS10_CS"/>
</dbReference>
<dbReference type="InterPro" id="IPR027486">
    <property type="entry name" value="Ribosomal_uS10_dom"/>
</dbReference>
<dbReference type="InterPro" id="IPR036838">
    <property type="entry name" value="Ribosomal_uS10_dom_sf"/>
</dbReference>
<dbReference type="NCBIfam" id="NF001861">
    <property type="entry name" value="PRK00596.1"/>
    <property type="match status" value="1"/>
</dbReference>
<dbReference type="NCBIfam" id="TIGR01049">
    <property type="entry name" value="rpsJ_bact"/>
    <property type="match status" value="1"/>
</dbReference>
<dbReference type="PANTHER" id="PTHR11700">
    <property type="entry name" value="30S RIBOSOMAL PROTEIN S10 FAMILY MEMBER"/>
    <property type="match status" value="1"/>
</dbReference>
<dbReference type="Pfam" id="PF00338">
    <property type="entry name" value="Ribosomal_S10"/>
    <property type="match status" value="1"/>
</dbReference>
<dbReference type="PRINTS" id="PR00971">
    <property type="entry name" value="RIBOSOMALS10"/>
</dbReference>
<dbReference type="SMART" id="SM01403">
    <property type="entry name" value="Ribosomal_S10"/>
    <property type="match status" value="1"/>
</dbReference>
<dbReference type="SUPFAM" id="SSF54999">
    <property type="entry name" value="Ribosomal protein S10"/>
    <property type="match status" value="1"/>
</dbReference>
<dbReference type="PROSITE" id="PS00361">
    <property type="entry name" value="RIBOSOMAL_S10"/>
    <property type="match status" value="1"/>
</dbReference>
<keyword id="KW-0687">Ribonucleoprotein</keyword>
<keyword id="KW-0689">Ribosomal protein</keyword>
<reference key="1">
    <citation type="submission" date="2008-06" db="EMBL/GenBank/DDBJ databases">
        <title>Lactobacillus casei BL23 complete genome sequence.</title>
        <authorList>
            <person name="Maze A."/>
            <person name="Boel G."/>
            <person name="Bourand A."/>
            <person name="Loux V."/>
            <person name="Gibrat J.F."/>
            <person name="Zuniga M."/>
            <person name="Hartke A."/>
            <person name="Deutscher J."/>
        </authorList>
    </citation>
    <scope>NUCLEOTIDE SEQUENCE [LARGE SCALE GENOMIC DNA]</scope>
    <source>
        <strain>BL23</strain>
    </source>
</reference>
<evidence type="ECO:0000255" key="1">
    <source>
        <dbReference type="HAMAP-Rule" id="MF_00508"/>
    </source>
</evidence>
<evidence type="ECO:0000305" key="2"/>
<comment type="function">
    <text evidence="1">Involved in the binding of tRNA to the ribosomes.</text>
</comment>
<comment type="subunit">
    <text evidence="1">Part of the 30S ribosomal subunit.</text>
</comment>
<comment type="similarity">
    <text evidence="1">Belongs to the universal ribosomal protein uS10 family.</text>
</comment>
<name>RS10_LACCB</name>